<sequence>MAENDSWDADDFEAEDLNQKGAASGPVIVKDRWEGEDEEEDVKDNWDDEEEAQDATKQEPQKTELKVPEKKKLQEKIKEKENLQKKRKEELKKQALESSNLPEITPEEQLAEKLRQQKLQEDSDLELAKEAFGVNVPVTGIDAMNPSTREDFTEFGKLLKEKITQYERSLYYPGFLEALVRDVCLSLEVEDLKKINSSLTVLCFEKQKQEKQQTKTKKKKKGVVPGGGLKGNMKDYLEDYGGMDEGYGREFDDFM</sequence>
<keyword id="KW-0175">Coiled coil</keyword>
<keyword id="KW-0963">Cytoplasm</keyword>
<keyword id="KW-0396">Initiation factor</keyword>
<keyword id="KW-0648">Protein biosynthesis</keyword>
<keyword id="KW-1185">Reference proteome</keyword>
<organism>
    <name type="scientific">Xenopus laevis</name>
    <name type="common">African clawed frog</name>
    <dbReference type="NCBI Taxonomy" id="8355"/>
    <lineage>
        <taxon>Eukaryota</taxon>
        <taxon>Metazoa</taxon>
        <taxon>Chordata</taxon>
        <taxon>Craniata</taxon>
        <taxon>Vertebrata</taxon>
        <taxon>Euteleostomi</taxon>
        <taxon>Amphibia</taxon>
        <taxon>Batrachia</taxon>
        <taxon>Anura</taxon>
        <taxon>Pipoidea</taxon>
        <taxon>Pipidae</taxon>
        <taxon>Xenopodinae</taxon>
        <taxon>Xenopus</taxon>
        <taxon>Xenopus</taxon>
    </lineage>
</organism>
<feature type="chain" id="PRO_0000365126" description="Eukaryotic translation initiation factor 3 subunit J">
    <location>
        <begin position="1"/>
        <end position="255"/>
    </location>
</feature>
<feature type="region of interest" description="Disordered" evidence="2">
    <location>
        <begin position="1"/>
        <end position="107"/>
    </location>
</feature>
<feature type="coiled-coil region" evidence="1">
    <location>
        <begin position="69"/>
        <end position="131"/>
    </location>
</feature>
<feature type="compositionally biased region" description="Acidic residues" evidence="2">
    <location>
        <begin position="1"/>
        <end position="16"/>
    </location>
</feature>
<feature type="compositionally biased region" description="Acidic residues" evidence="2">
    <location>
        <begin position="34"/>
        <end position="53"/>
    </location>
</feature>
<feature type="compositionally biased region" description="Basic and acidic residues" evidence="2">
    <location>
        <begin position="54"/>
        <end position="95"/>
    </location>
</feature>
<name>EIF3J_XENLA</name>
<proteinExistence type="evidence at transcript level"/>
<gene>
    <name type="primary">eif3j</name>
    <name type="synonym">eif3s1</name>
</gene>
<dbReference type="EMBL" id="BC072212">
    <property type="protein sequence ID" value="AAH72212.1"/>
    <property type="molecule type" value="mRNA"/>
</dbReference>
<dbReference type="RefSeq" id="NP_001085202.1">
    <property type="nucleotide sequence ID" value="NM_001091733.1"/>
</dbReference>
<dbReference type="SMR" id="Q6INR1"/>
<dbReference type="BioGRID" id="101661">
    <property type="interactions" value="1"/>
</dbReference>
<dbReference type="IntAct" id="Q6INR1">
    <property type="interactions" value="1"/>
</dbReference>
<dbReference type="DNASU" id="432295"/>
<dbReference type="GeneID" id="432295"/>
<dbReference type="KEGG" id="xla:432295"/>
<dbReference type="AGR" id="Xenbase:XB-GENE-999882"/>
<dbReference type="CTD" id="432295"/>
<dbReference type="Xenbase" id="XB-GENE-999882">
    <property type="gene designation" value="eif3j.S"/>
</dbReference>
<dbReference type="OMA" id="KPHYALW"/>
<dbReference type="OrthoDB" id="20381at2759"/>
<dbReference type="Proteomes" id="UP000186698">
    <property type="component" value="Chromosome 3S"/>
</dbReference>
<dbReference type="Bgee" id="432295">
    <property type="expression patterns" value="Expressed in blastula and 19 other cell types or tissues"/>
</dbReference>
<dbReference type="GO" id="GO:0016282">
    <property type="term" value="C:eukaryotic 43S preinitiation complex"/>
    <property type="evidence" value="ECO:0007669"/>
    <property type="project" value="UniProtKB-UniRule"/>
</dbReference>
<dbReference type="GO" id="GO:0033290">
    <property type="term" value="C:eukaryotic 48S preinitiation complex"/>
    <property type="evidence" value="ECO:0007669"/>
    <property type="project" value="UniProtKB-UniRule"/>
</dbReference>
<dbReference type="GO" id="GO:0005852">
    <property type="term" value="C:eukaryotic translation initiation factor 3 complex"/>
    <property type="evidence" value="ECO:0000250"/>
    <property type="project" value="UniProtKB"/>
</dbReference>
<dbReference type="GO" id="GO:0003743">
    <property type="term" value="F:translation initiation factor activity"/>
    <property type="evidence" value="ECO:0007669"/>
    <property type="project" value="UniProtKB-UniRule"/>
</dbReference>
<dbReference type="GO" id="GO:0001732">
    <property type="term" value="P:formation of cytoplasmic translation initiation complex"/>
    <property type="evidence" value="ECO:0007669"/>
    <property type="project" value="UniProtKB-UniRule"/>
</dbReference>
<dbReference type="FunFam" id="1.10.246.60:FF:000001">
    <property type="entry name" value="Eukaryotic translation initiation factor 3 subunit J"/>
    <property type="match status" value="1"/>
</dbReference>
<dbReference type="Gene3D" id="1.10.246.60">
    <property type="entry name" value="Eukaryotic translation initiation factor 3 like domains"/>
    <property type="match status" value="1"/>
</dbReference>
<dbReference type="HAMAP" id="MF_03009">
    <property type="entry name" value="eIF3j"/>
    <property type="match status" value="1"/>
</dbReference>
<dbReference type="InterPro" id="IPR023194">
    <property type="entry name" value="eIF3-like_dom_sf"/>
</dbReference>
<dbReference type="InterPro" id="IPR013906">
    <property type="entry name" value="eIF3j"/>
</dbReference>
<dbReference type="PANTHER" id="PTHR21681">
    <property type="entry name" value="EUKARYOTIC TRANSLATION INITIATION FACTOR 3 SUBUNIT J"/>
    <property type="match status" value="1"/>
</dbReference>
<dbReference type="PANTHER" id="PTHR21681:SF0">
    <property type="entry name" value="EUKARYOTIC TRANSLATION INITIATION FACTOR 3 SUBUNIT J"/>
    <property type="match status" value="1"/>
</dbReference>
<dbReference type="Pfam" id="PF08597">
    <property type="entry name" value="eIF3_subunit"/>
    <property type="match status" value="1"/>
</dbReference>
<accession>Q6INR1</accession>
<protein>
    <recommendedName>
        <fullName evidence="1">Eukaryotic translation initiation factor 3 subunit J</fullName>
        <shortName evidence="1">eIF3j</shortName>
    </recommendedName>
    <alternativeName>
        <fullName evidence="1">Eukaryotic translation initiation factor 3 subunit 1</fullName>
    </alternativeName>
    <alternativeName>
        <fullName evidence="1">eIF-3-alpha</fullName>
    </alternativeName>
    <alternativeName>
        <fullName evidence="1">eIF3 p35</fullName>
    </alternativeName>
</protein>
<evidence type="ECO:0000255" key="1">
    <source>
        <dbReference type="HAMAP-Rule" id="MF_03009"/>
    </source>
</evidence>
<evidence type="ECO:0000256" key="2">
    <source>
        <dbReference type="SAM" id="MobiDB-lite"/>
    </source>
</evidence>
<comment type="function">
    <text evidence="1">Component of the eukaryotic translation initiation factor 3 (eIF-3) complex, which is involved in protein synthesis of a specialized repertoire of mRNAs and, together with other initiation factors, stimulates binding of mRNA and methionyl-tRNAi to the 40S ribosome. The eIF-3 complex specifically targets and initiates translation of a subset of mRNAs involved in cell proliferation.</text>
</comment>
<comment type="subunit">
    <text evidence="1">Component of the eukaryotic translation initiation factor 3 (eIF-3) complex, which is composed of 13 subunits: eif3a, eif3b, eif3c, eif3d, eif3e, eif3f, eif3g, eif3h, eif3i, eif3j, eif3k, eif3l and eif3m.</text>
</comment>
<comment type="subcellular location">
    <subcellularLocation>
        <location evidence="1">Cytoplasm</location>
    </subcellularLocation>
</comment>
<comment type="similarity">
    <text evidence="1">Belongs to the eIF-3 subunit J family.</text>
</comment>
<reference key="1">
    <citation type="submission" date="2004-06" db="EMBL/GenBank/DDBJ databases">
        <authorList>
            <consortium name="NIH - Xenopus Gene Collection (XGC) project"/>
        </authorList>
    </citation>
    <scope>NUCLEOTIDE SEQUENCE [LARGE SCALE MRNA]</scope>
    <source>
        <tissue>Embryo</tissue>
    </source>
</reference>